<evidence type="ECO:0000255" key="1">
    <source>
        <dbReference type="HAMAP-Rule" id="MF_00251"/>
    </source>
</evidence>
<evidence type="ECO:0000305" key="2"/>
<proteinExistence type="inferred from homology"/>
<name>RL36_STAHJ</name>
<protein>
    <recommendedName>
        <fullName evidence="1">Large ribosomal subunit protein bL36</fullName>
    </recommendedName>
    <alternativeName>
        <fullName evidence="2">50S ribosomal protein L36</fullName>
    </alternativeName>
</protein>
<dbReference type="EMBL" id="AP006716">
    <property type="protein sequence ID" value="BAE04134.1"/>
    <property type="molecule type" value="Genomic_DNA"/>
</dbReference>
<dbReference type="RefSeq" id="WP_001829709.1">
    <property type="nucleotide sequence ID" value="NC_007168.1"/>
</dbReference>
<dbReference type="SMR" id="Q4L891"/>
<dbReference type="GeneID" id="93780214"/>
<dbReference type="KEGG" id="sha:SH0825"/>
<dbReference type="eggNOG" id="COG0257">
    <property type="taxonomic scope" value="Bacteria"/>
</dbReference>
<dbReference type="HOGENOM" id="CLU_135723_6_2_9"/>
<dbReference type="OrthoDB" id="9802520at2"/>
<dbReference type="Proteomes" id="UP000000543">
    <property type="component" value="Chromosome"/>
</dbReference>
<dbReference type="GO" id="GO:0005737">
    <property type="term" value="C:cytoplasm"/>
    <property type="evidence" value="ECO:0007669"/>
    <property type="project" value="UniProtKB-ARBA"/>
</dbReference>
<dbReference type="GO" id="GO:1990904">
    <property type="term" value="C:ribonucleoprotein complex"/>
    <property type="evidence" value="ECO:0007669"/>
    <property type="project" value="UniProtKB-KW"/>
</dbReference>
<dbReference type="GO" id="GO:0005840">
    <property type="term" value="C:ribosome"/>
    <property type="evidence" value="ECO:0007669"/>
    <property type="project" value="UniProtKB-KW"/>
</dbReference>
<dbReference type="GO" id="GO:0003735">
    <property type="term" value="F:structural constituent of ribosome"/>
    <property type="evidence" value="ECO:0007669"/>
    <property type="project" value="InterPro"/>
</dbReference>
<dbReference type="GO" id="GO:0006412">
    <property type="term" value="P:translation"/>
    <property type="evidence" value="ECO:0007669"/>
    <property type="project" value="UniProtKB-UniRule"/>
</dbReference>
<dbReference type="HAMAP" id="MF_00251">
    <property type="entry name" value="Ribosomal_bL36"/>
    <property type="match status" value="1"/>
</dbReference>
<dbReference type="InterPro" id="IPR000473">
    <property type="entry name" value="Ribosomal_bL36"/>
</dbReference>
<dbReference type="InterPro" id="IPR035977">
    <property type="entry name" value="Ribosomal_bL36_sp"/>
</dbReference>
<dbReference type="NCBIfam" id="TIGR01022">
    <property type="entry name" value="rpmJ_bact"/>
    <property type="match status" value="1"/>
</dbReference>
<dbReference type="PANTHER" id="PTHR42888">
    <property type="entry name" value="50S RIBOSOMAL PROTEIN L36, CHLOROPLASTIC"/>
    <property type="match status" value="1"/>
</dbReference>
<dbReference type="PANTHER" id="PTHR42888:SF1">
    <property type="entry name" value="LARGE RIBOSOMAL SUBUNIT PROTEIN BL36C"/>
    <property type="match status" value="1"/>
</dbReference>
<dbReference type="Pfam" id="PF00444">
    <property type="entry name" value="Ribosomal_L36"/>
    <property type="match status" value="1"/>
</dbReference>
<dbReference type="SUPFAM" id="SSF57840">
    <property type="entry name" value="Ribosomal protein L36"/>
    <property type="match status" value="1"/>
</dbReference>
<dbReference type="PROSITE" id="PS00828">
    <property type="entry name" value="RIBOSOMAL_L36"/>
    <property type="match status" value="1"/>
</dbReference>
<accession>Q4L891</accession>
<feature type="chain" id="PRO_0000302305" description="Large ribosomal subunit protein bL36">
    <location>
        <begin position="1"/>
        <end position="37"/>
    </location>
</feature>
<sequence>MKVRPSVKPICEKCKVIKRKGKVMVICDNPKHKQRQG</sequence>
<keyword id="KW-0687">Ribonucleoprotein</keyword>
<keyword id="KW-0689">Ribosomal protein</keyword>
<organism>
    <name type="scientific">Staphylococcus haemolyticus (strain JCSC1435)</name>
    <dbReference type="NCBI Taxonomy" id="279808"/>
    <lineage>
        <taxon>Bacteria</taxon>
        <taxon>Bacillati</taxon>
        <taxon>Bacillota</taxon>
        <taxon>Bacilli</taxon>
        <taxon>Bacillales</taxon>
        <taxon>Staphylococcaceae</taxon>
        <taxon>Staphylococcus</taxon>
    </lineage>
</organism>
<reference key="1">
    <citation type="journal article" date="2005" name="J. Bacteriol.">
        <title>Whole-genome sequencing of Staphylococcus haemolyticus uncovers the extreme plasticity of its genome and the evolution of human-colonizing staphylococcal species.</title>
        <authorList>
            <person name="Takeuchi F."/>
            <person name="Watanabe S."/>
            <person name="Baba T."/>
            <person name="Yuzawa H."/>
            <person name="Ito T."/>
            <person name="Morimoto Y."/>
            <person name="Kuroda M."/>
            <person name="Cui L."/>
            <person name="Takahashi M."/>
            <person name="Ankai A."/>
            <person name="Baba S."/>
            <person name="Fukui S."/>
            <person name="Lee J.C."/>
            <person name="Hiramatsu K."/>
        </authorList>
    </citation>
    <scope>NUCLEOTIDE SEQUENCE [LARGE SCALE GENOMIC DNA]</scope>
    <source>
        <strain>JCSC1435</strain>
    </source>
</reference>
<gene>
    <name evidence="1" type="primary">rpmJ</name>
    <name type="ordered locus">SH0825</name>
</gene>
<comment type="similarity">
    <text evidence="1">Belongs to the bacterial ribosomal protein bL36 family.</text>
</comment>